<name>PP182_ARATH</name>
<feature type="chain" id="PRO_0000356041" description="Pentatricopeptide repeat-containing protein At2g33760">
    <location>
        <begin position="1"/>
        <end position="583"/>
    </location>
</feature>
<feature type="repeat" description="PPR 1">
    <location>
        <begin position="71"/>
        <end position="105"/>
    </location>
</feature>
<feature type="repeat" description="PPR 2">
    <location>
        <begin position="106"/>
        <end position="140"/>
    </location>
</feature>
<feature type="repeat" description="PPR 3">
    <location>
        <begin position="141"/>
        <end position="171"/>
    </location>
</feature>
<feature type="repeat" description="PPR 4">
    <location>
        <begin position="172"/>
        <end position="206"/>
    </location>
</feature>
<feature type="repeat" description="PPR 5">
    <location>
        <begin position="207"/>
        <end position="241"/>
    </location>
</feature>
<feature type="repeat" description="PPR 6">
    <location>
        <begin position="242"/>
        <end position="276"/>
    </location>
</feature>
<feature type="repeat" description="PPR 7">
    <location>
        <begin position="277"/>
        <end position="303"/>
    </location>
</feature>
<feature type="repeat" description="PPR 8">
    <location>
        <begin position="309"/>
        <end position="339"/>
    </location>
</feature>
<feature type="repeat" description="PPR 9">
    <location>
        <begin position="345"/>
        <end position="379"/>
    </location>
</feature>
<feature type="region of interest" description="Type E motif">
    <location>
        <begin position="383"/>
        <end position="458"/>
    </location>
</feature>
<feature type="region of interest" description="Type E(+) motif">
    <location>
        <begin position="459"/>
        <end position="489"/>
    </location>
</feature>
<feature type="region of interest" description="Type DYW motif">
    <location>
        <begin position="490"/>
        <end position="583"/>
    </location>
</feature>
<sequence length="583" mass="64858">MTTKVAANSAAYEAIVRAGPRVKQLQQVHAHLIVTGYGRSRSLLTKLITLACSARAIAYTHLLFLSVPLPDDFLFNSVIKSTSKLRLPLHCVAYYRRMLSSNVSPSNYTFTSVIKSCADLSALRIGKGVHCHAVVSGFGLDTYVQAALVTFYSKCGDMEGARQVFDRMPEKSIVAWNSLVSGFEQNGLADEAIQVFYQMRESGFEPDSATFVSLLSACAQTGAVSLGSWVHQYIISEGLDLNVKLGTALINLYSRCGDVGKAREVFDKMKETNVAAWTAMISAYGTHGYGQQAVELFNKMEDDCGPIPNNVTFVAVLSACAHAGLVEEGRSVYKRMTKSYRLIPGVEHHVCMVDMLGRAGFLDEAYKFIHQLDATGKATAPALWTAMLGACKMHRNYDLGVEIAKRLIALEPDNPGHHVMLSNIYALSGKTDEVSHIRDGMMRNNLRKQVGYSVIEVENKTYMFSMGDESHQETGEIYRYLETLISRCKEIGYAPVSEEVMHQVEEEEKEFALRYHSEKLAVAFGLLKTVDVAITIVKNLRICEDCHSAFKYISIVSNRQITVRDKLRFHHFQNGSCSCLDYW</sequence>
<comment type="similarity">
    <text evidence="1">Belongs to the PPR family. PCMP-H subfamily.</text>
</comment>
<comment type="online information" name="Pentatricopeptide repeat proteins">
    <link uri="https://ppr.plantenergy.uwa.edu.au"/>
</comment>
<protein>
    <recommendedName>
        <fullName>Pentatricopeptide repeat-containing protein At2g33760</fullName>
    </recommendedName>
</protein>
<proteinExistence type="inferred from homology"/>
<keyword id="KW-1185">Reference proteome</keyword>
<keyword id="KW-0677">Repeat</keyword>
<evidence type="ECO:0000305" key="1"/>
<dbReference type="EMBL" id="U78721">
    <property type="protein sequence ID" value="AAC69141.1"/>
    <property type="molecule type" value="Genomic_DNA"/>
</dbReference>
<dbReference type="EMBL" id="CP002685">
    <property type="protein sequence ID" value="AEC08881.1"/>
    <property type="molecule type" value="Genomic_DNA"/>
</dbReference>
<dbReference type="PIR" id="C84749">
    <property type="entry name" value="C84749"/>
</dbReference>
<dbReference type="RefSeq" id="NP_180932.1">
    <property type="nucleotide sequence ID" value="NM_128935.1"/>
</dbReference>
<dbReference type="SMR" id="P93011"/>
<dbReference type="FunCoup" id="P93011">
    <property type="interactions" value="228"/>
</dbReference>
<dbReference type="STRING" id="3702.P93011"/>
<dbReference type="iPTMnet" id="P93011"/>
<dbReference type="PaxDb" id="3702-AT2G33760.1"/>
<dbReference type="ProteomicsDB" id="249151"/>
<dbReference type="EnsemblPlants" id="AT2G33760.1">
    <property type="protein sequence ID" value="AT2G33760.1"/>
    <property type="gene ID" value="AT2G33760"/>
</dbReference>
<dbReference type="GeneID" id="817942"/>
<dbReference type="Gramene" id="AT2G33760.1">
    <property type="protein sequence ID" value="AT2G33760.1"/>
    <property type="gene ID" value="AT2G33760"/>
</dbReference>
<dbReference type="KEGG" id="ath:AT2G33760"/>
<dbReference type="Araport" id="AT2G33760"/>
<dbReference type="TAIR" id="AT2G33760"/>
<dbReference type="eggNOG" id="KOG4197">
    <property type="taxonomic scope" value="Eukaryota"/>
</dbReference>
<dbReference type="HOGENOM" id="CLU_002706_37_1_1"/>
<dbReference type="InParanoid" id="P93011"/>
<dbReference type="OMA" id="FYQMRES"/>
<dbReference type="OrthoDB" id="185373at2759"/>
<dbReference type="PhylomeDB" id="P93011"/>
<dbReference type="PRO" id="PR:P93011"/>
<dbReference type="Proteomes" id="UP000006548">
    <property type="component" value="Chromosome 2"/>
</dbReference>
<dbReference type="ExpressionAtlas" id="P93011">
    <property type="expression patterns" value="baseline and differential"/>
</dbReference>
<dbReference type="GO" id="GO:0003723">
    <property type="term" value="F:RNA binding"/>
    <property type="evidence" value="ECO:0007669"/>
    <property type="project" value="InterPro"/>
</dbReference>
<dbReference type="GO" id="GO:0008270">
    <property type="term" value="F:zinc ion binding"/>
    <property type="evidence" value="ECO:0007669"/>
    <property type="project" value="InterPro"/>
</dbReference>
<dbReference type="GO" id="GO:0009451">
    <property type="term" value="P:RNA modification"/>
    <property type="evidence" value="ECO:0007669"/>
    <property type="project" value="InterPro"/>
</dbReference>
<dbReference type="FunFam" id="1.25.40.10:FF:000344">
    <property type="entry name" value="Pentatricopeptide repeat-containing protein"/>
    <property type="match status" value="1"/>
</dbReference>
<dbReference type="FunFam" id="1.25.40.10:FF:001050">
    <property type="entry name" value="Pentatricopeptide repeat-containing protein At2g33760"/>
    <property type="match status" value="1"/>
</dbReference>
<dbReference type="FunFam" id="1.25.40.10:FF:000231">
    <property type="entry name" value="Pentatricopeptide repeat-containing protein chloroplastic"/>
    <property type="match status" value="1"/>
</dbReference>
<dbReference type="Gene3D" id="1.25.40.10">
    <property type="entry name" value="Tetratricopeptide repeat domain"/>
    <property type="match status" value="4"/>
</dbReference>
<dbReference type="InterPro" id="IPR032867">
    <property type="entry name" value="DYW_dom"/>
</dbReference>
<dbReference type="InterPro" id="IPR046848">
    <property type="entry name" value="E_motif"/>
</dbReference>
<dbReference type="InterPro" id="IPR002885">
    <property type="entry name" value="Pentatricopeptide_rpt"/>
</dbReference>
<dbReference type="InterPro" id="IPR046960">
    <property type="entry name" value="PPR_At4g14850-like_plant"/>
</dbReference>
<dbReference type="InterPro" id="IPR011990">
    <property type="entry name" value="TPR-like_helical_dom_sf"/>
</dbReference>
<dbReference type="NCBIfam" id="TIGR00756">
    <property type="entry name" value="PPR"/>
    <property type="match status" value="5"/>
</dbReference>
<dbReference type="PANTHER" id="PTHR47926:SF355">
    <property type="entry name" value="DYW DOMAIN-CONTAINING PROTEIN"/>
    <property type="match status" value="1"/>
</dbReference>
<dbReference type="PANTHER" id="PTHR47926">
    <property type="entry name" value="PENTATRICOPEPTIDE REPEAT-CONTAINING PROTEIN"/>
    <property type="match status" value="1"/>
</dbReference>
<dbReference type="Pfam" id="PF14432">
    <property type="entry name" value="DYW_deaminase"/>
    <property type="match status" value="1"/>
</dbReference>
<dbReference type="Pfam" id="PF20431">
    <property type="entry name" value="E_motif"/>
    <property type="match status" value="1"/>
</dbReference>
<dbReference type="Pfam" id="PF01535">
    <property type="entry name" value="PPR"/>
    <property type="match status" value="2"/>
</dbReference>
<dbReference type="Pfam" id="PF13041">
    <property type="entry name" value="PPR_2"/>
    <property type="match status" value="2"/>
</dbReference>
<dbReference type="SUPFAM" id="SSF48452">
    <property type="entry name" value="TPR-like"/>
    <property type="match status" value="1"/>
</dbReference>
<dbReference type="PROSITE" id="PS51375">
    <property type="entry name" value="PPR"/>
    <property type="match status" value="10"/>
</dbReference>
<gene>
    <name type="primary">PCMP-H6</name>
    <name type="ordered locus">At2g33760</name>
    <name type="ORF">T1B8.7</name>
</gene>
<reference key="1">
    <citation type="journal article" date="1999" name="Nature">
        <title>Sequence and analysis of chromosome 2 of the plant Arabidopsis thaliana.</title>
        <authorList>
            <person name="Lin X."/>
            <person name="Kaul S."/>
            <person name="Rounsley S.D."/>
            <person name="Shea T.P."/>
            <person name="Benito M.-I."/>
            <person name="Town C.D."/>
            <person name="Fujii C.Y."/>
            <person name="Mason T.M."/>
            <person name="Bowman C.L."/>
            <person name="Barnstead M.E."/>
            <person name="Feldblyum T.V."/>
            <person name="Buell C.R."/>
            <person name="Ketchum K.A."/>
            <person name="Lee J.J."/>
            <person name="Ronning C.M."/>
            <person name="Koo H.L."/>
            <person name="Moffat K.S."/>
            <person name="Cronin L.A."/>
            <person name="Shen M."/>
            <person name="Pai G."/>
            <person name="Van Aken S."/>
            <person name="Umayam L."/>
            <person name="Tallon L.J."/>
            <person name="Gill J.E."/>
            <person name="Adams M.D."/>
            <person name="Carrera A.J."/>
            <person name="Creasy T.H."/>
            <person name="Goodman H.M."/>
            <person name="Somerville C.R."/>
            <person name="Copenhaver G.P."/>
            <person name="Preuss D."/>
            <person name="Nierman W.C."/>
            <person name="White O."/>
            <person name="Eisen J.A."/>
            <person name="Salzberg S.L."/>
            <person name="Fraser C.M."/>
            <person name="Venter J.C."/>
        </authorList>
    </citation>
    <scope>NUCLEOTIDE SEQUENCE [LARGE SCALE GENOMIC DNA]</scope>
    <source>
        <strain>cv. Columbia</strain>
    </source>
</reference>
<reference key="2">
    <citation type="journal article" date="2017" name="Plant J.">
        <title>Araport11: a complete reannotation of the Arabidopsis thaliana reference genome.</title>
        <authorList>
            <person name="Cheng C.Y."/>
            <person name="Krishnakumar V."/>
            <person name="Chan A.P."/>
            <person name="Thibaud-Nissen F."/>
            <person name="Schobel S."/>
            <person name="Town C.D."/>
        </authorList>
    </citation>
    <scope>GENOME REANNOTATION</scope>
    <source>
        <strain>cv. Columbia</strain>
    </source>
</reference>
<reference key="3">
    <citation type="journal article" date="2000" name="Plant Mol. Biol.">
        <title>In Arabidopsis thaliana, 1% of the genome codes for a novel protein family unique to plants.</title>
        <authorList>
            <person name="Aubourg S."/>
            <person name="Boudet N."/>
            <person name="Kreis M."/>
            <person name="Lecharny A."/>
        </authorList>
    </citation>
    <scope>GENE FAMILY</scope>
</reference>
<reference key="4">
    <citation type="journal article" date="2004" name="Plant Cell">
        <title>Genome-wide analysis of Arabidopsis pentatricopeptide repeat proteins reveals their essential role in organelle biogenesis.</title>
        <authorList>
            <person name="Lurin C."/>
            <person name="Andres C."/>
            <person name="Aubourg S."/>
            <person name="Bellaoui M."/>
            <person name="Bitton F."/>
            <person name="Bruyere C."/>
            <person name="Caboche M."/>
            <person name="Debast C."/>
            <person name="Gualberto J."/>
            <person name="Hoffmann B."/>
            <person name="Lecharny A."/>
            <person name="Le Ret M."/>
            <person name="Martin-Magniette M.-L."/>
            <person name="Mireau H."/>
            <person name="Peeters N."/>
            <person name="Renou J.-P."/>
            <person name="Szurek B."/>
            <person name="Taconnat L."/>
            <person name="Small I."/>
        </authorList>
    </citation>
    <scope>GENE FAMILY</scope>
</reference>
<accession>P93011</accession>
<organism>
    <name type="scientific">Arabidopsis thaliana</name>
    <name type="common">Mouse-ear cress</name>
    <dbReference type="NCBI Taxonomy" id="3702"/>
    <lineage>
        <taxon>Eukaryota</taxon>
        <taxon>Viridiplantae</taxon>
        <taxon>Streptophyta</taxon>
        <taxon>Embryophyta</taxon>
        <taxon>Tracheophyta</taxon>
        <taxon>Spermatophyta</taxon>
        <taxon>Magnoliopsida</taxon>
        <taxon>eudicotyledons</taxon>
        <taxon>Gunneridae</taxon>
        <taxon>Pentapetalae</taxon>
        <taxon>rosids</taxon>
        <taxon>malvids</taxon>
        <taxon>Brassicales</taxon>
        <taxon>Brassicaceae</taxon>
        <taxon>Camelineae</taxon>
        <taxon>Arabidopsis</taxon>
    </lineage>
</organism>